<feature type="chain" id="PRO_0000079259" description="Spore coat protein C">
    <location>
        <begin position="1"/>
        <end position="66"/>
    </location>
</feature>
<gene>
    <name type="primary">cotC</name>
    <name type="ordered locus">BSU17700</name>
</gene>
<dbReference type="EMBL" id="X05680">
    <property type="protein sequence ID" value="CAA29167.1"/>
    <property type="status" value="ALT_TERM"/>
    <property type="molecule type" value="Genomic_DNA"/>
</dbReference>
<dbReference type="EMBL" id="AL009126">
    <property type="protein sequence ID" value="CAB13654.2"/>
    <property type="molecule type" value="Genomic_DNA"/>
</dbReference>
<dbReference type="PIR" id="H69604">
    <property type="entry name" value="H69604"/>
</dbReference>
<dbReference type="RefSeq" id="NP_389653.2">
    <property type="nucleotide sequence ID" value="NC_000964.3"/>
</dbReference>
<dbReference type="RefSeq" id="WP_003231636.1">
    <property type="nucleotide sequence ID" value="NZ_OZ025638.1"/>
</dbReference>
<dbReference type="FunCoup" id="P07790">
    <property type="interactions" value="16"/>
</dbReference>
<dbReference type="IntAct" id="P07790">
    <property type="interactions" value="2"/>
</dbReference>
<dbReference type="STRING" id="224308.BSU17700"/>
<dbReference type="PaxDb" id="224308-BSU17700"/>
<dbReference type="EnsemblBacteria" id="CAB13654">
    <property type="protein sequence ID" value="CAB13654"/>
    <property type="gene ID" value="BSU_17700"/>
</dbReference>
<dbReference type="GeneID" id="939543"/>
<dbReference type="KEGG" id="bsu:BSU17700"/>
<dbReference type="PATRIC" id="fig|224308.179.peg.1926"/>
<dbReference type="InParanoid" id="P07790"/>
<dbReference type="BioCyc" id="BSUB:BSU17700-MONOMER"/>
<dbReference type="Proteomes" id="UP000001570">
    <property type="component" value="Chromosome"/>
</dbReference>
<dbReference type="GO" id="GO:0030435">
    <property type="term" value="P:sporulation resulting in formation of a cellular spore"/>
    <property type="evidence" value="ECO:0007669"/>
    <property type="project" value="UniProtKB-KW"/>
</dbReference>
<organism>
    <name type="scientific">Bacillus subtilis (strain 168)</name>
    <dbReference type="NCBI Taxonomy" id="224308"/>
    <lineage>
        <taxon>Bacteria</taxon>
        <taxon>Bacillati</taxon>
        <taxon>Bacillota</taxon>
        <taxon>Bacilli</taxon>
        <taxon>Bacillales</taxon>
        <taxon>Bacillaceae</taxon>
        <taxon>Bacillus</taxon>
    </lineage>
</organism>
<accession>P07790</accession>
<accession>Q9S6X6</accession>
<proteinExistence type="evidence at protein level"/>
<name>COTC_BACSU</name>
<evidence type="ECO:0000305" key="1"/>
<reference key="1">
    <citation type="journal article" date="1987" name="J. Mol. Biol.">
        <title>Genes encoding spore coat polypeptides from Bacillus subtilis.</title>
        <authorList>
            <person name="Donovan W."/>
            <person name="Zheng L."/>
            <person name="Sandman K."/>
            <person name="Losick R."/>
        </authorList>
    </citation>
    <scope>NUCLEOTIDE SEQUENCE [GENOMIC DNA]</scope>
</reference>
<reference key="2">
    <citation type="journal article" date="1997" name="Nature">
        <title>The complete genome sequence of the Gram-positive bacterium Bacillus subtilis.</title>
        <authorList>
            <person name="Kunst F."/>
            <person name="Ogasawara N."/>
            <person name="Moszer I."/>
            <person name="Albertini A.M."/>
            <person name="Alloni G."/>
            <person name="Azevedo V."/>
            <person name="Bertero M.G."/>
            <person name="Bessieres P."/>
            <person name="Bolotin A."/>
            <person name="Borchert S."/>
            <person name="Borriss R."/>
            <person name="Boursier L."/>
            <person name="Brans A."/>
            <person name="Braun M."/>
            <person name="Brignell S.C."/>
            <person name="Bron S."/>
            <person name="Brouillet S."/>
            <person name="Bruschi C.V."/>
            <person name="Caldwell B."/>
            <person name="Capuano V."/>
            <person name="Carter N.M."/>
            <person name="Choi S.-K."/>
            <person name="Codani J.-J."/>
            <person name="Connerton I.F."/>
            <person name="Cummings N.J."/>
            <person name="Daniel R.A."/>
            <person name="Denizot F."/>
            <person name="Devine K.M."/>
            <person name="Duesterhoeft A."/>
            <person name="Ehrlich S.D."/>
            <person name="Emmerson P.T."/>
            <person name="Entian K.-D."/>
            <person name="Errington J."/>
            <person name="Fabret C."/>
            <person name="Ferrari E."/>
            <person name="Foulger D."/>
            <person name="Fritz C."/>
            <person name="Fujita M."/>
            <person name="Fujita Y."/>
            <person name="Fuma S."/>
            <person name="Galizzi A."/>
            <person name="Galleron N."/>
            <person name="Ghim S.-Y."/>
            <person name="Glaser P."/>
            <person name="Goffeau A."/>
            <person name="Golightly E.J."/>
            <person name="Grandi G."/>
            <person name="Guiseppi G."/>
            <person name="Guy B.J."/>
            <person name="Haga K."/>
            <person name="Haiech J."/>
            <person name="Harwood C.R."/>
            <person name="Henaut A."/>
            <person name="Hilbert H."/>
            <person name="Holsappel S."/>
            <person name="Hosono S."/>
            <person name="Hullo M.-F."/>
            <person name="Itaya M."/>
            <person name="Jones L.-M."/>
            <person name="Joris B."/>
            <person name="Karamata D."/>
            <person name="Kasahara Y."/>
            <person name="Klaerr-Blanchard M."/>
            <person name="Klein C."/>
            <person name="Kobayashi Y."/>
            <person name="Koetter P."/>
            <person name="Koningstein G."/>
            <person name="Krogh S."/>
            <person name="Kumano M."/>
            <person name="Kurita K."/>
            <person name="Lapidus A."/>
            <person name="Lardinois S."/>
            <person name="Lauber J."/>
            <person name="Lazarevic V."/>
            <person name="Lee S.-M."/>
            <person name="Levine A."/>
            <person name="Liu H."/>
            <person name="Masuda S."/>
            <person name="Mauel C."/>
            <person name="Medigue C."/>
            <person name="Medina N."/>
            <person name="Mellado R.P."/>
            <person name="Mizuno M."/>
            <person name="Moestl D."/>
            <person name="Nakai S."/>
            <person name="Noback M."/>
            <person name="Noone D."/>
            <person name="O'Reilly M."/>
            <person name="Ogawa K."/>
            <person name="Ogiwara A."/>
            <person name="Oudega B."/>
            <person name="Park S.-H."/>
            <person name="Parro V."/>
            <person name="Pohl T.M."/>
            <person name="Portetelle D."/>
            <person name="Porwollik S."/>
            <person name="Prescott A.M."/>
            <person name="Presecan E."/>
            <person name="Pujic P."/>
            <person name="Purnelle B."/>
            <person name="Rapoport G."/>
            <person name="Rey M."/>
            <person name="Reynolds S."/>
            <person name="Rieger M."/>
            <person name="Rivolta C."/>
            <person name="Rocha E."/>
            <person name="Roche B."/>
            <person name="Rose M."/>
            <person name="Sadaie Y."/>
            <person name="Sato T."/>
            <person name="Scanlan E."/>
            <person name="Schleich S."/>
            <person name="Schroeter R."/>
            <person name="Scoffone F."/>
            <person name="Sekiguchi J."/>
            <person name="Sekowska A."/>
            <person name="Seror S.J."/>
            <person name="Serror P."/>
            <person name="Shin B.-S."/>
            <person name="Soldo B."/>
            <person name="Sorokin A."/>
            <person name="Tacconi E."/>
            <person name="Takagi T."/>
            <person name="Takahashi H."/>
            <person name="Takemaru K."/>
            <person name="Takeuchi M."/>
            <person name="Tamakoshi A."/>
            <person name="Tanaka T."/>
            <person name="Terpstra P."/>
            <person name="Tognoni A."/>
            <person name="Tosato V."/>
            <person name="Uchiyama S."/>
            <person name="Vandenbol M."/>
            <person name="Vannier F."/>
            <person name="Vassarotti A."/>
            <person name="Viari A."/>
            <person name="Wambutt R."/>
            <person name="Wedler E."/>
            <person name="Wedler H."/>
            <person name="Weitzenegger T."/>
            <person name="Winters P."/>
            <person name="Wipat A."/>
            <person name="Yamamoto H."/>
            <person name="Yamane K."/>
            <person name="Yasumoto K."/>
            <person name="Yata K."/>
            <person name="Yoshida K."/>
            <person name="Yoshikawa H.-F."/>
            <person name="Zumstein E."/>
            <person name="Yoshikawa H."/>
            <person name="Danchin A."/>
        </authorList>
    </citation>
    <scope>NUCLEOTIDE SEQUENCE [LARGE SCALE GENOMIC DNA]</scope>
    <source>
        <strain>168</strain>
    </source>
</reference>
<reference key="3">
    <citation type="journal article" date="1990" name="J. Mol. Biol.">
        <title>Cascade regulation of spore coat gene expression in Bacillus subtilis.</title>
        <authorList>
            <person name="Zheng L."/>
            <person name="Losick R."/>
        </authorList>
    </citation>
    <scope>NUCLEOTIDE SEQUENCE [GENOMIC DNA] OF 1-14</scope>
</reference>
<sequence length="66" mass="8817">MGYYKKYKEEYYTVKKTYYKKYYEYDKKDYDCDYDKKYDDYDKKYYDHDKKDYDYVVEYKKHKKHY</sequence>
<keyword id="KW-1185">Reference proteome</keyword>
<keyword id="KW-0749">Sporulation</keyword>
<protein>
    <recommendedName>
        <fullName>Spore coat protein C</fullName>
    </recommendedName>
</protein>
<comment type="interaction">
    <interactant intactId="EBI-6401480">
        <id>P07790</id>
    </interactant>
    <interactant intactId="EBI-6470838">
        <id>O31802</id>
        <label>ynzH</label>
    </interactant>
    <organismsDiffer>false</organismsDiffer>
    <experiments>3</experiments>
</comment>
<comment type="similarity">
    <text evidence="1">To B.subtilis protein YnzH.</text>
</comment>